<evidence type="ECO:0000255" key="1">
    <source>
        <dbReference type="HAMAP-Rule" id="MF_00443"/>
    </source>
</evidence>
<sequence length="264" mass="27938">MNVQVSPDSLVIAGKTYGSRLLTGTGKFKDLEETRLATEAAGAQIVTVAIRRTNIGQNPGEPNLLDVLPPERFTILPNTAGCYTAEDAVRTCRLARELLDGHNLTKLEVLGDQKSLYPDVVQTLKAAEQLVKDGFEVMVYTSDDPILAKRLEEIGCAAVMPLAAPIGSGLGIQNKYNLLQIIEDAKVPIIVDAGVGTASDAAIAMELGCDGVLMNTAIAGARHPVLMASAMRKAVEAGREAFLAGRIPRKRYASASSPIDGLIG</sequence>
<keyword id="KW-0963">Cytoplasm</keyword>
<keyword id="KW-0704">Schiff base</keyword>
<keyword id="KW-0784">Thiamine biosynthesis</keyword>
<keyword id="KW-0808">Transferase</keyword>
<comment type="function">
    <text evidence="1">Catalyzes the rearrangement of 1-deoxy-D-xylulose 5-phosphate (DXP) to produce the thiazole phosphate moiety of thiamine. Sulfur is provided by the thiocarboxylate moiety of the carrier protein ThiS. In vitro, sulfur can be provided by H(2)S.</text>
</comment>
<comment type="catalytic activity">
    <reaction evidence="1">
        <text>[ThiS sulfur-carrier protein]-C-terminal-Gly-aminoethanethioate + 2-iminoacetate + 1-deoxy-D-xylulose 5-phosphate = [ThiS sulfur-carrier protein]-C-terminal Gly-Gly + 2-[(2R,5Z)-2-carboxy-4-methylthiazol-5(2H)-ylidene]ethyl phosphate + 2 H2O + H(+)</text>
        <dbReference type="Rhea" id="RHEA:26297"/>
        <dbReference type="Rhea" id="RHEA-COMP:12909"/>
        <dbReference type="Rhea" id="RHEA-COMP:19908"/>
        <dbReference type="ChEBI" id="CHEBI:15377"/>
        <dbReference type="ChEBI" id="CHEBI:15378"/>
        <dbReference type="ChEBI" id="CHEBI:57792"/>
        <dbReference type="ChEBI" id="CHEBI:62899"/>
        <dbReference type="ChEBI" id="CHEBI:77846"/>
        <dbReference type="ChEBI" id="CHEBI:90778"/>
        <dbReference type="ChEBI" id="CHEBI:232372"/>
        <dbReference type="EC" id="2.8.1.10"/>
    </reaction>
</comment>
<comment type="pathway">
    <text evidence="1">Cofactor biosynthesis; thiamine diphosphate biosynthesis.</text>
</comment>
<comment type="subunit">
    <text evidence="1">Homotetramer. Forms heterodimers with either ThiH or ThiS.</text>
</comment>
<comment type="subcellular location">
    <subcellularLocation>
        <location evidence="1">Cytoplasm</location>
    </subcellularLocation>
</comment>
<comment type="similarity">
    <text evidence="1">Belongs to the ThiG family.</text>
</comment>
<gene>
    <name evidence="1" type="primary">thiG</name>
    <name type="ordered locus">Smal_3190</name>
</gene>
<reference key="1">
    <citation type="submission" date="2008-06" db="EMBL/GenBank/DDBJ databases">
        <title>Complete sequence of Stenotrophomonas maltophilia R551-3.</title>
        <authorList>
            <consortium name="US DOE Joint Genome Institute"/>
            <person name="Lucas S."/>
            <person name="Copeland A."/>
            <person name="Lapidus A."/>
            <person name="Glavina del Rio T."/>
            <person name="Dalin E."/>
            <person name="Tice H."/>
            <person name="Pitluck S."/>
            <person name="Chain P."/>
            <person name="Malfatti S."/>
            <person name="Shin M."/>
            <person name="Vergez L."/>
            <person name="Lang D."/>
            <person name="Schmutz J."/>
            <person name="Larimer F."/>
            <person name="Land M."/>
            <person name="Hauser L."/>
            <person name="Kyrpides N."/>
            <person name="Mikhailova N."/>
            <person name="Taghavi S."/>
            <person name="Monchy S."/>
            <person name="Newman L."/>
            <person name="Vangronsveld J."/>
            <person name="van der Lelie D."/>
            <person name="Richardson P."/>
        </authorList>
    </citation>
    <scope>NUCLEOTIDE SEQUENCE [LARGE SCALE GENOMIC DNA]</scope>
    <source>
        <strain>R551-3</strain>
    </source>
</reference>
<dbReference type="EC" id="2.8.1.10" evidence="1"/>
<dbReference type="EMBL" id="CP001111">
    <property type="protein sequence ID" value="ACF52889.1"/>
    <property type="molecule type" value="Genomic_DNA"/>
</dbReference>
<dbReference type="RefSeq" id="WP_006387459.1">
    <property type="nucleotide sequence ID" value="NC_011071.1"/>
</dbReference>
<dbReference type="SMR" id="B4STS6"/>
<dbReference type="STRING" id="391008.Smal_3190"/>
<dbReference type="KEGG" id="smt:Smal_3190"/>
<dbReference type="eggNOG" id="COG2022">
    <property type="taxonomic scope" value="Bacteria"/>
</dbReference>
<dbReference type="HOGENOM" id="CLU_062233_1_0_6"/>
<dbReference type="OrthoDB" id="9805935at2"/>
<dbReference type="UniPathway" id="UPA00060"/>
<dbReference type="Proteomes" id="UP000001867">
    <property type="component" value="Chromosome"/>
</dbReference>
<dbReference type="GO" id="GO:0005737">
    <property type="term" value="C:cytoplasm"/>
    <property type="evidence" value="ECO:0007669"/>
    <property type="project" value="UniProtKB-SubCell"/>
</dbReference>
<dbReference type="GO" id="GO:1990107">
    <property type="term" value="F:thiazole synthase activity"/>
    <property type="evidence" value="ECO:0007669"/>
    <property type="project" value="UniProtKB-EC"/>
</dbReference>
<dbReference type="GO" id="GO:0009229">
    <property type="term" value="P:thiamine diphosphate biosynthetic process"/>
    <property type="evidence" value="ECO:0007669"/>
    <property type="project" value="UniProtKB-UniRule"/>
</dbReference>
<dbReference type="CDD" id="cd04728">
    <property type="entry name" value="ThiG"/>
    <property type="match status" value="1"/>
</dbReference>
<dbReference type="FunFam" id="3.20.20.70:FF:000049">
    <property type="entry name" value="Thiazole synthase"/>
    <property type="match status" value="1"/>
</dbReference>
<dbReference type="Gene3D" id="3.20.20.70">
    <property type="entry name" value="Aldolase class I"/>
    <property type="match status" value="1"/>
</dbReference>
<dbReference type="HAMAP" id="MF_00443">
    <property type="entry name" value="ThiG"/>
    <property type="match status" value="1"/>
</dbReference>
<dbReference type="InterPro" id="IPR013785">
    <property type="entry name" value="Aldolase_TIM"/>
</dbReference>
<dbReference type="InterPro" id="IPR033983">
    <property type="entry name" value="Thiazole_synthase_ThiG"/>
</dbReference>
<dbReference type="InterPro" id="IPR008867">
    <property type="entry name" value="ThiG"/>
</dbReference>
<dbReference type="PANTHER" id="PTHR34266">
    <property type="entry name" value="THIAZOLE SYNTHASE"/>
    <property type="match status" value="1"/>
</dbReference>
<dbReference type="PANTHER" id="PTHR34266:SF2">
    <property type="entry name" value="THIAZOLE SYNTHASE"/>
    <property type="match status" value="1"/>
</dbReference>
<dbReference type="Pfam" id="PF05690">
    <property type="entry name" value="ThiG"/>
    <property type="match status" value="1"/>
</dbReference>
<dbReference type="SUPFAM" id="SSF110399">
    <property type="entry name" value="ThiG-like"/>
    <property type="match status" value="1"/>
</dbReference>
<organism>
    <name type="scientific">Stenotrophomonas maltophilia (strain R551-3)</name>
    <dbReference type="NCBI Taxonomy" id="391008"/>
    <lineage>
        <taxon>Bacteria</taxon>
        <taxon>Pseudomonadati</taxon>
        <taxon>Pseudomonadota</taxon>
        <taxon>Gammaproteobacteria</taxon>
        <taxon>Lysobacterales</taxon>
        <taxon>Lysobacteraceae</taxon>
        <taxon>Stenotrophomonas</taxon>
        <taxon>Stenotrophomonas maltophilia group</taxon>
    </lineage>
</organism>
<name>THIG_STRM5</name>
<feature type="chain" id="PRO_1000196906" description="Thiazole synthase">
    <location>
        <begin position="1"/>
        <end position="264"/>
    </location>
</feature>
<feature type="active site" description="Schiff-base intermediate with DXP" evidence="1">
    <location>
        <position position="106"/>
    </location>
</feature>
<feature type="binding site" evidence="1">
    <location>
        <position position="167"/>
    </location>
    <ligand>
        <name>1-deoxy-D-xylulose 5-phosphate</name>
        <dbReference type="ChEBI" id="CHEBI:57792"/>
    </ligand>
</feature>
<feature type="binding site" evidence="1">
    <location>
        <begin position="193"/>
        <end position="194"/>
    </location>
    <ligand>
        <name>1-deoxy-D-xylulose 5-phosphate</name>
        <dbReference type="ChEBI" id="CHEBI:57792"/>
    </ligand>
</feature>
<feature type="binding site" evidence="1">
    <location>
        <begin position="215"/>
        <end position="216"/>
    </location>
    <ligand>
        <name>1-deoxy-D-xylulose 5-phosphate</name>
        <dbReference type="ChEBI" id="CHEBI:57792"/>
    </ligand>
</feature>
<protein>
    <recommendedName>
        <fullName evidence="1">Thiazole synthase</fullName>
        <ecNumber evidence="1">2.8.1.10</ecNumber>
    </recommendedName>
</protein>
<proteinExistence type="inferred from homology"/>
<accession>B4STS6</accession>